<reference key="1">
    <citation type="journal article" date="2004" name="Nat. Biotechnol.">
        <title>The genome sequence of the anaerobic, sulfate-reducing bacterium Desulfovibrio vulgaris Hildenborough.</title>
        <authorList>
            <person name="Heidelberg J.F."/>
            <person name="Seshadri R."/>
            <person name="Haveman S.A."/>
            <person name="Hemme C.L."/>
            <person name="Paulsen I.T."/>
            <person name="Kolonay J.F."/>
            <person name="Eisen J.A."/>
            <person name="Ward N.L."/>
            <person name="Methe B.A."/>
            <person name="Brinkac L.M."/>
            <person name="Daugherty S.C."/>
            <person name="DeBoy R.T."/>
            <person name="Dodson R.J."/>
            <person name="Durkin A.S."/>
            <person name="Madupu R."/>
            <person name="Nelson W.C."/>
            <person name="Sullivan S.A."/>
            <person name="Fouts D.E."/>
            <person name="Haft D.H."/>
            <person name="Selengut J."/>
            <person name="Peterson J.D."/>
            <person name="Davidsen T.M."/>
            <person name="Zafar N."/>
            <person name="Zhou L."/>
            <person name="Radune D."/>
            <person name="Dimitrov G."/>
            <person name="Hance M."/>
            <person name="Tran K."/>
            <person name="Khouri H.M."/>
            <person name="Gill J."/>
            <person name="Utterback T.R."/>
            <person name="Feldblyum T.V."/>
            <person name="Wall J.D."/>
            <person name="Voordouw G."/>
            <person name="Fraser C.M."/>
        </authorList>
    </citation>
    <scope>NUCLEOTIDE SEQUENCE [LARGE SCALE GENOMIC DNA]</scope>
    <source>
        <strain>ATCC 29579 / DSM 644 / CCUG 34227 / NCIMB 8303 / VKM B-1760 / Hildenborough</strain>
    </source>
</reference>
<keyword id="KW-1185">Reference proteome</keyword>
<keyword id="KW-0687">Ribonucleoprotein</keyword>
<keyword id="KW-0689">Ribosomal protein</keyword>
<keyword id="KW-0694">RNA-binding</keyword>
<keyword id="KW-0699">rRNA-binding</keyword>
<feature type="chain" id="PRO_0000177155" description="Large ribosomal subunit protein bL20">
    <location>
        <begin position="1"/>
        <end position="117"/>
    </location>
</feature>
<accession>Q728R8</accession>
<protein>
    <recommendedName>
        <fullName evidence="1">Large ribosomal subunit protein bL20</fullName>
    </recommendedName>
    <alternativeName>
        <fullName evidence="2">50S ribosomal protein L20</fullName>
    </alternativeName>
</protein>
<dbReference type="EMBL" id="AE017285">
    <property type="protein sequence ID" value="AAS97007.1"/>
    <property type="molecule type" value="Genomic_DNA"/>
</dbReference>
<dbReference type="RefSeq" id="WP_010939805.1">
    <property type="nucleotide sequence ID" value="NC_002937.3"/>
</dbReference>
<dbReference type="RefSeq" id="YP_011747.1">
    <property type="nucleotide sequence ID" value="NC_002937.3"/>
</dbReference>
<dbReference type="SMR" id="Q728R8"/>
<dbReference type="STRING" id="882.DVU_2535"/>
<dbReference type="PaxDb" id="882-DVU_2535"/>
<dbReference type="EnsemblBacteria" id="AAS97007">
    <property type="protein sequence ID" value="AAS97007"/>
    <property type="gene ID" value="DVU_2535"/>
</dbReference>
<dbReference type="KEGG" id="dvu:DVU_2535"/>
<dbReference type="PATRIC" id="fig|882.5.peg.2293"/>
<dbReference type="eggNOG" id="COG0292">
    <property type="taxonomic scope" value="Bacteria"/>
</dbReference>
<dbReference type="HOGENOM" id="CLU_123265_0_1_7"/>
<dbReference type="OrthoDB" id="9808966at2"/>
<dbReference type="PhylomeDB" id="Q728R8"/>
<dbReference type="Proteomes" id="UP000002194">
    <property type="component" value="Chromosome"/>
</dbReference>
<dbReference type="GO" id="GO:1990904">
    <property type="term" value="C:ribonucleoprotein complex"/>
    <property type="evidence" value="ECO:0007669"/>
    <property type="project" value="UniProtKB-KW"/>
</dbReference>
<dbReference type="GO" id="GO:0005840">
    <property type="term" value="C:ribosome"/>
    <property type="evidence" value="ECO:0007669"/>
    <property type="project" value="UniProtKB-KW"/>
</dbReference>
<dbReference type="GO" id="GO:0019843">
    <property type="term" value="F:rRNA binding"/>
    <property type="evidence" value="ECO:0007669"/>
    <property type="project" value="UniProtKB-UniRule"/>
</dbReference>
<dbReference type="GO" id="GO:0003735">
    <property type="term" value="F:structural constituent of ribosome"/>
    <property type="evidence" value="ECO:0007669"/>
    <property type="project" value="InterPro"/>
</dbReference>
<dbReference type="GO" id="GO:0000027">
    <property type="term" value="P:ribosomal large subunit assembly"/>
    <property type="evidence" value="ECO:0007669"/>
    <property type="project" value="UniProtKB-UniRule"/>
</dbReference>
<dbReference type="GO" id="GO:0006412">
    <property type="term" value="P:translation"/>
    <property type="evidence" value="ECO:0007669"/>
    <property type="project" value="InterPro"/>
</dbReference>
<dbReference type="CDD" id="cd07026">
    <property type="entry name" value="Ribosomal_L20"/>
    <property type="match status" value="1"/>
</dbReference>
<dbReference type="FunFam" id="1.10.1900.20:FF:000001">
    <property type="entry name" value="50S ribosomal protein L20"/>
    <property type="match status" value="1"/>
</dbReference>
<dbReference type="Gene3D" id="6.10.160.10">
    <property type="match status" value="1"/>
</dbReference>
<dbReference type="Gene3D" id="1.10.1900.20">
    <property type="entry name" value="Ribosomal protein L20"/>
    <property type="match status" value="1"/>
</dbReference>
<dbReference type="HAMAP" id="MF_00382">
    <property type="entry name" value="Ribosomal_bL20"/>
    <property type="match status" value="1"/>
</dbReference>
<dbReference type="InterPro" id="IPR005813">
    <property type="entry name" value="Ribosomal_bL20"/>
</dbReference>
<dbReference type="InterPro" id="IPR049946">
    <property type="entry name" value="RIBOSOMAL_L20_CS"/>
</dbReference>
<dbReference type="InterPro" id="IPR035566">
    <property type="entry name" value="Ribosomal_protein_bL20_C"/>
</dbReference>
<dbReference type="NCBIfam" id="TIGR01032">
    <property type="entry name" value="rplT_bact"/>
    <property type="match status" value="1"/>
</dbReference>
<dbReference type="PANTHER" id="PTHR10986">
    <property type="entry name" value="39S RIBOSOMAL PROTEIN L20"/>
    <property type="match status" value="1"/>
</dbReference>
<dbReference type="Pfam" id="PF00453">
    <property type="entry name" value="Ribosomal_L20"/>
    <property type="match status" value="1"/>
</dbReference>
<dbReference type="PRINTS" id="PR00062">
    <property type="entry name" value="RIBOSOMALL20"/>
</dbReference>
<dbReference type="SUPFAM" id="SSF74731">
    <property type="entry name" value="Ribosomal protein L20"/>
    <property type="match status" value="1"/>
</dbReference>
<dbReference type="PROSITE" id="PS00937">
    <property type="entry name" value="RIBOSOMAL_L20"/>
    <property type="match status" value="1"/>
</dbReference>
<proteinExistence type="inferred from homology"/>
<gene>
    <name evidence="1" type="primary">rplT</name>
    <name type="ordered locus">DVU_2535</name>
</gene>
<comment type="function">
    <text evidence="1">Binds directly to 23S ribosomal RNA and is necessary for the in vitro assembly process of the 50S ribosomal subunit. It is not involved in the protein synthesizing functions of that subunit.</text>
</comment>
<comment type="similarity">
    <text evidence="1">Belongs to the bacterial ribosomal protein bL20 family.</text>
</comment>
<organism>
    <name type="scientific">Nitratidesulfovibrio vulgaris (strain ATCC 29579 / DSM 644 / CCUG 34227 / NCIMB 8303 / VKM B-1760 / Hildenborough)</name>
    <name type="common">Desulfovibrio vulgaris</name>
    <dbReference type="NCBI Taxonomy" id="882"/>
    <lineage>
        <taxon>Bacteria</taxon>
        <taxon>Pseudomonadati</taxon>
        <taxon>Thermodesulfobacteriota</taxon>
        <taxon>Desulfovibrionia</taxon>
        <taxon>Desulfovibrionales</taxon>
        <taxon>Desulfovibrionaceae</taxon>
        <taxon>Nitratidesulfovibrio</taxon>
    </lineage>
</organism>
<sequence>MRVKRGLAAHRRHKKYLDMAKGYRGGRSRLYRTAREAVERSLCYAFRDRKVKKREFRKLWILRINAAARLNGLSYSKFMHGLTLAGVELNRKVLADLAVREKDDFAKIAELAKSKLN</sequence>
<name>RL20_NITV2</name>
<evidence type="ECO:0000255" key="1">
    <source>
        <dbReference type="HAMAP-Rule" id="MF_00382"/>
    </source>
</evidence>
<evidence type="ECO:0000305" key="2"/>